<reference key="1">
    <citation type="journal article" date="1997" name="J. Exp. Med.">
        <title>A new mouse gene, SRG3, related to the SWI3 of Saccharomyces cerevisiae, is required for apoptosis induced by glucocorticoids in a thymoma cell line.</title>
        <authorList>
            <person name="Jeon S.H."/>
            <person name="Kang M.G."/>
            <person name="Kim Y.H."/>
            <person name="Jin Y.H."/>
            <person name="Lee C."/>
            <person name="Chung H.-Y."/>
            <person name="Kwon H."/>
            <person name="Park S.D."/>
            <person name="Seong R.H."/>
        </authorList>
    </citation>
    <scope>NUCLEOTIDE SEQUENCE [MRNA] (ISOFORM 1)</scope>
    <source>
        <strain>C57BL/6J</strain>
    </source>
</reference>
<reference key="2">
    <citation type="journal article" date="2004" name="Genome Res.">
        <title>The status, quality, and expansion of the NIH full-length cDNA project: the Mammalian Gene Collection (MGC).</title>
        <authorList>
            <consortium name="The MGC Project Team"/>
        </authorList>
    </citation>
    <scope>NUCLEOTIDE SEQUENCE [LARGE SCALE MRNA] (ISOFORM 2)</scope>
    <scope>NUCLEOTIDE SEQUENCE [LARGE SCALE MRNA] OF 1-892 (ISOFORM 1)</scope>
    <source>
        <strain>C57BL/6J</strain>
        <tissue>Brain</tissue>
    </source>
</reference>
<reference key="3">
    <citation type="journal article" date="2001" name="Mol. Cell. Biol.">
        <title>Srg3, a mouse homolog of yeast SWI3, is essential for early embryogenesis and involved in brain development.</title>
        <authorList>
            <person name="Kim J.K."/>
            <person name="Huh S.-O."/>
            <person name="Choi H."/>
            <person name="Lee K.-S."/>
            <person name="Shin D."/>
            <person name="Lee C."/>
            <person name="Nam J.-S."/>
            <person name="Kim H."/>
            <person name="Chung H."/>
            <person name="Lee H.W."/>
            <person name="Park S.D."/>
            <person name="Seong R.H."/>
        </authorList>
    </citation>
    <scope>FUNCTION</scope>
</reference>
<reference key="4">
    <citation type="journal article" date="2007" name="Neuron">
        <title>An essential switch in subunit composition of a chromatin remodeling complex during neural development.</title>
        <authorList>
            <person name="Lessard J."/>
            <person name="Wu J.I."/>
            <person name="Ranish J.A."/>
            <person name="Wan M."/>
            <person name="Winslow M.M."/>
            <person name="Staahl B.T."/>
            <person name="Wu H."/>
            <person name="Aebersold R."/>
            <person name="Graef I.A."/>
            <person name="Crabtree G.R."/>
        </authorList>
    </citation>
    <scope>FUNCTION OF THE NBAF AND NPBAF COMPLEXES</scope>
    <scope>IDENTIFICATION BY MASS SPECTROMETRY</scope>
    <scope>IDENTIFICATION IN THE NBAF AND NPBAF COMPLEXES</scope>
    <scope>DEVELOPMENTAL STAGE</scope>
</reference>
<reference key="5">
    <citation type="journal article" date="2009" name="Mol. Cell. Proteomics">
        <title>Large scale localization of protein phosphorylation by use of electron capture dissociation mass spectrometry.</title>
        <authorList>
            <person name="Sweet S.M."/>
            <person name="Bailey C.M."/>
            <person name="Cunningham D.L."/>
            <person name="Heath J.K."/>
            <person name="Cooper H.J."/>
        </authorList>
    </citation>
    <scope>PHOSPHORYLATION [LARGE SCALE ANALYSIS] AT SER-327 AND SER-329</scope>
    <scope>IDENTIFICATION BY MASS SPECTROMETRY [LARGE SCALE ANALYSIS]</scope>
    <source>
        <tissue>Embryonic fibroblast</tissue>
    </source>
</reference>
<reference key="6">
    <citation type="journal article" date="2010" name="Cell">
        <title>A tissue-specific atlas of mouse protein phosphorylation and expression.</title>
        <authorList>
            <person name="Huttlin E.L."/>
            <person name="Jedrychowski M.P."/>
            <person name="Elias J.E."/>
            <person name="Goswami T."/>
            <person name="Rad R."/>
            <person name="Beausoleil S.A."/>
            <person name="Villen J."/>
            <person name="Haas W."/>
            <person name="Sowa M.E."/>
            <person name="Gygi S.P."/>
        </authorList>
    </citation>
    <scope>PHOSPHORYLATION [LARGE SCALE ANALYSIS] AT SER-327; SER-329; SER-572; SER-775; SER-821 AND SER-824</scope>
    <scope>IDENTIFICATION BY MASS SPECTROMETRY [LARGE SCALE ANALYSIS]</scope>
    <source>
        <tissue>Kidney</tissue>
        <tissue>Lung</tissue>
        <tissue>Spleen</tissue>
        <tissue>Testis</tissue>
    </source>
</reference>
<reference key="7">
    <citation type="journal article" date="2010" name="EMBO J.">
        <title>Crosstalk between C/EBPbeta phosphorylation, arginine methylation, and SWI/SNF/Mediator implies an indexing transcription factor code.</title>
        <authorList>
            <person name="Kowenz-Leutz E."/>
            <person name="Pless O."/>
            <person name="Dittmar G."/>
            <person name="Knoblich M."/>
            <person name="Leutz A."/>
        </authorList>
    </citation>
    <scope>INTERACTION WITH CEBPB</scope>
</reference>
<reference key="8">
    <citation type="journal article" date="2010" name="Mol. Cell">
        <title>Jmjd3 and UTX play a demethylase-independent role in chromatin remodeling to regulate T-box family member-dependent gene expression.</title>
        <authorList>
            <person name="Miller S.A."/>
            <person name="Mohn S.E."/>
            <person name="Weinmann A.S."/>
        </authorList>
    </citation>
    <scope>INTERACTION WITH KDM6B</scope>
</reference>
<reference key="9">
    <citation type="journal article" date="2013" name="Mol. Cell">
        <title>SIRT5-mediated lysine desuccinylation impacts diverse metabolic pathways.</title>
        <authorList>
            <person name="Park J."/>
            <person name="Chen Y."/>
            <person name="Tishkoff D.X."/>
            <person name="Peng C."/>
            <person name="Tan M."/>
            <person name="Dai L."/>
            <person name="Xie Z."/>
            <person name="Zhang Y."/>
            <person name="Zwaans B.M."/>
            <person name="Skinner M.E."/>
            <person name="Lombard D.B."/>
            <person name="Zhao Y."/>
        </authorList>
    </citation>
    <scope>ACETYLATION [LARGE SCALE ANALYSIS] AT LYS-345</scope>
    <scope>IDENTIFICATION BY MASS SPECTROMETRY [LARGE SCALE ANALYSIS]</scope>
    <source>
        <tissue>Embryonic fibroblast</tissue>
    </source>
</reference>
<reference key="10">
    <citation type="journal article" date="2014" name="Mol. Cell. Proteomics">
        <title>Immunoaffinity enrichment and mass spectrometry analysis of protein methylation.</title>
        <authorList>
            <person name="Guo A."/>
            <person name="Gu H."/>
            <person name="Zhou J."/>
            <person name="Mulhern D."/>
            <person name="Wang Y."/>
            <person name="Lee K.A."/>
            <person name="Yang V."/>
            <person name="Aguiar M."/>
            <person name="Kornhauser J."/>
            <person name="Jia X."/>
            <person name="Ren J."/>
            <person name="Beausoleil S.A."/>
            <person name="Silva J.C."/>
            <person name="Vemulapalli V."/>
            <person name="Bedford M.T."/>
            <person name="Comb M.J."/>
        </authorList>
    </citation>
    <scope>METHYLATION [LARGE SCALE ANALYSIS] AT ARG-1064</scope>
    <scope>IDENTIFICATION BY MASS SPECTROMETRY [LARGE SCALE ANALYSIS]</scope>
    <source>
        <tissue>Embryo</tissue>
    </source>
</reference>
<reference key="11">
    <citation type="journal article" date="2012" name="J. Biol. Chem.">
        <title>SWI/SNF chromatin-remodeling factors: multiscale analyses and diverse functions.</title>
        <authorList>
            <person name="Euskirchen G."/>
            <person name="Auerbach R.K."/>
            <person name="Snyder M."/>
        </authorList>
    </citation>
    <scope>REVIEW ON SWI/SNF CHROMATIN REMODELING COMPLEXES</scope>
</reference>
<reference key="12">
    <citation type="journal article" date="2015" name="Sci. Adv.">
        <title>Mammalian SWI/SNF chromatin remodeling complexes and cancer: Mechanistic insights gained from human genomics.</title>
        <authorList>
            <person name="Kadoch C."/>
            <person name="Crabtree G.R."/>
        </authorList>
    </citation>
    <scope>REVIEW ON SWI/SNF CHROMATIN REMODELING COMPLEXES</scope>
</reference>
<reference key="13">
    <citation type="journal article" date="2018" name="J. Biol. Chem.">
        <title>Glioma tumor suppressor candidate region gene 1 (GLTSCR1) and its paralog GLTSCR1-like form SWI/SNF chromatin remodeling subcomplexes.</title>
        <authorList>
            <person name="Alpsoy A."/>
            <person name="Dykhuizen E.C."/>
        </authorList>
    </citation>
    <scope>IDENTIFICATION IN THE GBAF COMPLEX</scope>
</reference>
<protein>
    <recommendedName>
        <fullName>SWI/SNF complex subunit SMARCC1</fullName>
    </recommendedName>
    <alternativeName>
        <fullName>BRG1-associated factor 155</fullName>
    </alternativeName>
    <alternativeName>
        <fullName>SWI/SNF complex 155 kDa subunit</fullName>
    </alternativeName>
    <alternativeName>
        <fullName>SWI/SNF-related matrix-associated actin-dependent regulator of chromatin subfamily C member 1</fullName>
    </alternativeName>
    <alternativeName>
        <fullName>SWI3-related protein</fullName>
        <shortName>BAF155</shortName>
    </alternativeName>
</protein>
<feature type="chain" id="PRO_0000197116" description="SWI/SNF complex subunit SMARCC1">
    <location>
        <begin position="1"/>
        <end position="1104"/>
    </location>
</feature>
<feature type="domain" description="MarR-like" evidence="5">
    <location>
        <begin position="37"/>
        <end position="163"/>
    </location>
</feature>
<feature type="domain" description="BRCT; N-terminus" evidence="5">
    <location>
        <begin position="167"/>
        <end position="210"/>
    </location>
</feature>
<feature type="domain" description="Chromo" evidence="5">
    <location>
        <begin position="216"/>
        <end position="244"/>
    </location>
</feature>
<feature type="domain" description="BRCT; C-terminus" evidence="5">
    <location>
        <begin position="260"/>
        <end position="284"/>
    </location>
</feature>
<feature type="domain" description="SWIRM" evidence="3">
    <location>
        <begin position="448"/>
        <end position="545"/>
    </location>
</feature>
<feature type="domain" description="SANT" evidence="4">
    <location>
        <begin position="617"/>
        <end position="668"/>
    </location>
</feature>
<feature type="region of interest" description="MarR-like, BRCT and chromo domains module" evidence="5">
    <location>
        <begin position="27"/>
        <end position="301"/>
    </location>
</feature>
<feature type="region of interest" description="Disordered" evidence="6">
    <location>
        <begin position="295"/>
        <end position="445"/>
    </location>
</feature>
<feature type="region of interest" description="Disordered" evidence="6">
    <location>
        <begin position="744"/>
        <end position="859"/>
    </location>
</feature>
<feature type="region of interest" description="Disordered" evidence="6">
    <location>
        <begin position="955"/>
        <end position="1021"/>
    </location>
</feature>
<feature type="region of interest" description="Disordered" evidence="6">
    <location>
        <begin position="1041"/>
        <end position="1104"/>
    </location>
</feature>
<feature type="coiled-coil region" evidence="2">
    <location>
        <begin position="909"/>
        <end position="945"/>
    </location>
</feature>
<feature type="compositionally biased region" description="Basic and acidic residues" evidence="6">
    <location>
        <begin position="301"/>
        <end position="317"/>
    </location>
</feature>
<feature type="compositionally biased region" description="Acidic residues" evidence="6">
    <location>
        <begin position="775"/>
        <end position="784"/>
    </location>
</feature>
<feature type="compositionally biased region" description="Basic and acidic residues" evidence="6">
    <location>
        <begin position="788"/>
        <end position="859"/>
    </location>
</feature>
<feature type="compositionally biased region" description="Low complexity" evidence="6">
    <location>
        <begin position="956"/>
        <end position="973"/>
    </location>
</feature>
<feature type="compositionally biased region" description="Pro residues" evidence="6">
    <location>
        <begin position="994"/>
        <end position="1017"/>
    </location>
</feature>
<feature type="compositionally biased region" description="Pro residues" evidence="6">
    <location>
        <begin position="1048"/>
        <end position="1057"/>
    </location>
</feature>
<feature type="compositionally biased region" description="Pro residues" evidence="6">
    <location>
        <begin position="1073"/>
        <end position="1104"/>
    </location>
</feature>
<feature type="modified residue" description="Phosphoserine" evidence="1">
    <location>
        <position position="309"/>
    </location>
</feature>
<feature type="modified residue" description="Phosphoserine" evidence="16 17">
    <location>
        <position position="327"/>
    </location>
</feature>
<feature type="modified residue" description="Phosphoserine" evidence="16 17">
    <location>
        <position position="329"/>
    </location>
</feature>
<feature type="modified residue" description="Phosphothreonine" evidence="1">
    <location>
        <position position="334"/>
    </location>
</feature>
<feature type="modified residue" description="N6-acetyllysine" evidence="1">
    <location>
        <position position="344"/>
    </location>
</feature>
<feature type="modified residue" description="N6-acetyllysine" evidence="18">
    <location>
        <position position="345"/>
    </location>
</feature>
<feature type="modified residue" description="Phosphoserine" evidence="1">
    <location>
        <position position="349"/>
    </location>
</feature>
<feature type="modified residue" description="N6-acetyllysine" evidence="1">
    <location>
        <position position="353"/>
    </location>
</feature>
<feature type="modified residue" description="Phosphoserine" evidence="1">
    <location>
        <position position="356"/>
    </location>
</feature>
<feature type="modified residue" description="N6-acetyllysine; alternate" evidence="1">
    <location>
        <position position="358"/>
    </location>
</feature>
<feature type="modified residue" description="Phosphothreonine" evidence="1">
    <location>
        <position position="397"/>
    </location>
</feature>
<feature type="modified residue" description="Phosphoserine" evidence="17">
    <location>
        <position position="572"/>
    </location>
</feature>
<feature type="modified residue" description="Phosphoserine" evidence="17">
    <location>
        <position position="775"/>
    </location>
</feature>
<feature type="modified residue" description="Phosphoserine" evidence="17">
    <location>
        <position position="821"/>
    </location>
</feature>
<feature type="modified residue" description="Phosphoserine" evidence="17">
    <location>
        <position position="824"/>
    </location>
</feature>
<feature type="modified residue" description="N6-acetyllysine" evidence="1">
    <location>
        <position position="947"/>
    </location>
</feature>
<feature type="modified residue" description="Asymmetric dimethylarginine" evidence="19">
    <location>
        <position position="1064"/>
    </location>
</feature>
<feature type="cross-link" description="Glycyl lysine isopeptide (Lys-Gly) (interchain with G-Cter in SUMO2)" evidence="1">
    <location>
        <position position="178"/>
    </location>
</feature>
<feature type="cross-link" description="Glycyl lysine isopeptide (Lys-Gly) (interchain with G-Cter in SUMO2); alternate" evidence="1">
    <location>
        <position position="358"/>
    </location>
</feature>
<feature type="cross-link" description="Glycyl lysine isopeptide (Lys-Gly) (interchain with G-Cter in SUMO2)" evidence="1">
    <location>
        <position position="591"/>
    </location>
</feature>
<feature type="cross-link" description="Glycyl lysine isopeptide (Lys-Gly) (interchain with G-Cter in SUMO2)" evidence="1">
    <location>
        <position position="738"/>
    </location>
</feature>
<feature type="cross-link" description="Glycyl lysine isopeptide (Lys-Gly) (interchain with G-Cter in SUMO2)" evidence="1">
    <location>
        <position position="795"/>
    </location>
</feature>
<feature type="cross-link" description="Glycyl lysine isopeptide (Lys-Gly) (interchain with G-Cter in SUMO2)" evidence="1">
    <location>
        <position position="828"/>
    </location>
</feature>
<feature type="cross-link" description="Glycyl lysine isopeptide (Lys-Gly) (interchain with G-Cter in SUMO2)" evidence="1">
    <location>
        <position position="855"/>
    </location>
</feature>
<feature type="splice variant" id="VSP_012489" description="In isoform 2." evidence="12">
    <original>YPPPPQQQQPPPPADGVPPPPAPGPPASATP</original>
    <variation>CK</variation>
    <location>
        <begin position="1074"/>
        <end position="1104"/>
    </location>
</feature>
<feature type="sequence conflict" description="In Ref. 1; AAB42085." evidence="15" ref="1">
    <original>G</original>
    <variation>S</variation>
    <location>
        <position position="132"/>
    </location>
</feature>
<feature type="sequence conflict" description="In Ref. 1; AAB42085." evidence="15" ref="1">
    <original>R</original>
    <variation>G</variation>
    <location>
        <position position="468"/>
    </location>
</feature>
<feature type="sequence conflict" description="In Ref. 1; AAB42085." evidence="15" ref="1">
    <original>R</original>
    <variation>C</variation>
    <location>
        <position position="498"/>
    </location>
</feature>
<feature type="sequence conflict" description="In Ref. 1; AAB42085." evidence="15" ref="1">
    <original>R</original>
    <variation>L</variation>
    <location>
        <position position="512"/>
    </location>
</feature>
<feature type="sequence conflict" description="In Ref. 1; AAB42085." evidence="15" ref="1">
    <original>L</original>
    <variation>P</variation>
    <location>
        <position position="883"/>
    </location>
</feature>
<feature type="sequence conflict" description="In Ref. 2; AAH53064." evidence="15" ref="2">
    <original>I</original>
    <variation>K</variation>
    <location>
        <position position="891"/>
    </location>
</feature>
<feature type="sequence conflict" description="In Ref. 2; AAH52423." evidence="15" ref="2">
    <original>R</original>
    <variation>L</variation>
    <location>
        <position position="952"/>
    </location>
</feature>
<feature type="sequence conflict" description="In Ref. 1; AAB42085." evidence="15" ref="1">
    <original>A</original>
    <variation>R</variation>
    <location>
        <position position="984"/>
    </location>
</feature>
<comment type="function">
    <text evidence="1 7 8 13 14">Involved in transcriptional activation and repression of select genes by chromatin remodeling (alteration of DNA-nucleosome topology). Component of SWI/SNF chromatin remodeling complexes that carry out key enzymatic activities, changing chromatin structure by altering DNA-histone contacts within a nucleosome in an ATP-dependent manner. May stimulate the ATPase activity of the catalytic subunit of the complex. Belongs to the neural progenitors-specific chromatin remodeling complex (npBAF complex) and the neuron-specific chromatin remodeling complex (nBAF complex). During neural development a switch from a stem/progenitor to a postmitotic chromatin remodeling mechanism occurs as neurons exit the cell cycle and become committed to their adult state. The transition from proliferating neural stem/progenitor cells to postmitotic neurons requires a switch in subunit composition of the npBAF and nBAF complexes. As neural progenitors exit mitosis and differentiate into neurons, npBAF complexes which contain ACTL6A/BAF53A and PHF10/BAF45A, are exchanged for homologous alternative ACTL6B/BAF53B and DPF1/BAF45B or DPF3/BAF45C subunits in neuron-specific complexes (nBAF). The npBAF complex is essential for the self-renewal/proliferative capacity of the multipotent neural stem cells. The nBAF complex along with CREST plays a role regulating the activity of genes essential for dendrite growth.</text>
</comment>
<comment type="subunit">
    <text evidence="1 8 9 10 11 13 14">Component of the multiprotein chromatin-remodeling complexes SWI/SNF: SWI/SNF-A (BAF), SWI/SNF-B (PBAF) and related complexes. The canonical complex contains a catalytic subunit (either SMARCA4/BRG1/BAF190A or SMARCA2/BRM/BAF190B) and at least SMARCE1, ACTL6A/BAF53, SMARCC1/BAF155, SMARCC2/BAF170, and SMARCB1/SNF5/BAF47. Other subunits specific to each of the complexes may also be present permitting several possible combinations developmentally and tissue specific (Probable). Component of the BAF complex, which includes at least actin (ACTB), ARID1A/BAF250A, ARID1B/BAF250B, SMARCA2/BRM, SMARCA4/BRG1, ACTL6A/BAF53, ACTL6B/BAF53B, SMARCE1/BAF57, SMARCC1/BAF155, SMARCC2/BAF170, SMARCB1/SNF5/INI1, and one or more SMARCD1/BAF60A, SMARCD2/BAF60B, or SMARCD3/BAF60C. In muscle cells, the BAF complex also contains DPF3 (By similarity). Component of neural progenitors-specific chromatin remodeling complex (npBAF complex) composed of at least, ARID1A/BAF250A or ARID1B/BAF250B, SMARCD1/BAF60A, SMARCD3/BAF60C, SMARCA2/BRM/BAF190B, SMARCA4/BRG1/BAF190A, SMARCB1/BAF47, SMARCC1/BAF155, SMARCE1/BAF57, SMARCC2/BAF170, PHF10/BAF45A, ACTL6A/BAF53A and actin. Component of neuron-specific chromatin remodeling complex (nBAF complex) composed of at least, ARID1A/BAF250A or ARID1B/BAF250B, SMARCD1/BAF60A, SMARCD3/BAF60C, SMARCA2/BRM/BAF190B, SMARCA4/BRG1/BAF190A, SMARCB1/BAF47, SMARCC1/BAF155, SMARCE1/BAF57, SMARCC2/BAF170, DPF1/BAF45B, DPF3/BAF45C, ACTL6B/BAF53B and actin (PubMed:17640523). Component of the SWI/SNF-B (PBAF) chromatin remodeling complex, at least composed of SMARCA4/BRG1, SMARCB1/BAF47/SNF5, ACTL6A/BAF53A or ACTL6B/BAF53B, SMARCE1/BAF57, SMARCD1/BAF60A, SMARCD2/BAF60B, perhaps SMARCD3/BAF60C, SMARCC1/BAF155, SMARCC2/BAF170, PBRM1/BAF180, ARID2/BAF200 and actin (PubMed:22952240, PubMed:26601204). Component of SWI/SNF (GBAF) subcomplex, which includes at least BICRA or BICRAL (mutually exclusive), BRD9, SS18, SMARCA2/BRM, SMARCA4/BRG1/BAF190A, ACTL6A/BAF53, SMARCC1/BAF155, and SMARCD1/BAF60A (PubMed:29374058). May also interact with the SIN3A histone deacetylase transcription repressor complex in conjunction with SMARCA2 and SMARCA4. The minimal complex composed of SMARCC1 and SMARCA4 seems to be able to associate with cyclin such as CCNE1 or transcription factors such as KLF1 or GATA1. Interacts with NR3C1 and SMARD1. Interacts with TRIP12; leading to disrupt interaction between TRIP12 and SMARCE1 and prevent SMARCE1 ubiquitination (By similarity). Interacts with CEBPB (when not methylated) (PubMed:20111005). Interacts with KDM6B (PubMed:21095589). Interacts with MKKS; the interaction takes place predominantly in the cytoplasm and may modulate SMARCC1 location (By similarity). Interacts with DPF2 (By similarity). Interacts with PRDM1/BLIMP1 (By similarity). Interacts with DPF3a (isoform 2 of DPF3/BAF45C) and with HDGFL2 in a DPF3a-dependent manner (By similarity).</text>
</comment>
<comment type="interaction">
    <interactant intactId="EBI-648047">
        <id>P97496</id>
    </interactant>
    <interactant intactId="EBI-1210244">
        <id>Q3TKT4</id>
        <label>Smarca4</label>
    </interactant>
    <organismsDiffer>false</organismsDiffer>
    <experiments>7</experiments>
</comment>
<comment type="interaction">
    <interactant intactId="EBI-648047">
        <id>P97496</id>
    </interactant>
    <interactant intactId="EBI-689365">
        <id>Q9Z0H3</id>
        <label>Smarcb1</label>
    </interactant>
    <organismsDiffer>false</organismsDiffer>
    <experiments>5</experiments>
</comment>
<comment type="interaction">
    <interactant intactId="EBI-648047">
        <id>P97496</id>
    </interactant>
    <interactant intactId="EBI-371529">
        <id>Q61466</id>
        <label>Smarcd1</label>
    </interactant>
    <organismsDiffer>false</organismsDiffer>
    <experiments>3</experiments>
</comment>
<comment type="subcellular location">
    <subcellularLocation>
        <location evidence="15">Nucleus</location>
    </subcellularLocation>
    <subcellularLocation>
        <location evidence="1">Cytoplasm</location>
    </subcellularLocation>
</comment>
<comment type="alternative products">
    <event type="alternative splicing"/>
    <isoform>
        <id>P97496-1</id>
        <name>1</name>
        <sequence type="displayed"/>
    </isoform>
    <isoform>
        <id>P97496-2</id>
        <name>2</name>
        <sequence type="described" ref="VSP_012489"/>
    </isoform>
</comment>
<comment type="tissue specificity">
    <text>Highly expressed in adult brain, testis and thymus.</text>
</comment>
<comment type="developmental stage">
    <text evidence="8">Highly expressed in all organs except heart and liver (12.5 dpc and 14.5 dpc). The level of expression gradually diminishes as embryos develop, with expression restricted mostly to the CNS and thymus at 18.5 dpc. Expressed ubiquitously throughout the developing spinal cord, brain and other embryonic tissues at 10.5 dpc-16.5 dpc.</text>
</comment>
<comment type="similarity">
    <text evidence="15">Belongs to the SMARCC family.</text>
</comment>
<comment type="sequence caution" evidence="15">
    <conflict type="frameshift">
        <sequence resource="EMBL-CDS" id="AAB42085"/>
    </conflict>
</comment>
<organism>
    <name type="scientific">Mus musculus</name>
    <name type="common">Mouse</name>
    <dbReference type="NCBI Taxonomy" id="10090"/>
    <lineage>
        <taxon>Eukaryota</taxon>
        <taxon>Metazoa</taxon>
        <taxon>Chordata</taxon>
        <taxon>Craniata</taxon>
        <taxon>Vertebrata</taxon>
        <taxon>Euteleostomi</taxon>
        <taxon>Mammalia</taxon>
        <taxon>Eutheria</taxon>
        <taxon>Euarchontoglires</taxon>
        <taxon>Glires</taxon>
        <taxon>Rodentia</taxon>
        <taxon>Myomorpha</taxon>
        <taxon>Muroidea</taxon>
        <taxon>Muridae</taxon>
        <taxon>Murinae</taxon>
        <taxon>Mus</taxon>
        <taxon>Mus</taxon>
    </lineage>
</organism>
<keyword id="KW-0007">Acetylation</keyword>
<keyword id="KW-0025">Alternative splicing</keyword>
<keyword id="KW-0156">Chromatin regulator</keyword>
<keyword id="KW-0175">Coiled coil</keyword>
<keyword id="KW-0963">Cytoplasm</keyword>
<keyword id="KW-1017">Isopeptide bond</keyword>
<keyword id="KW-0488">Methylation</keyword>
<keyword id="KW-0524">Neurogenesis</keyword>
<keyword id="KW-0539">Nucleus</keyword>
<keyword id="KW-0597">Phosphoprotein</keyword>
<keyword id="KW-1185">Reference proteome</keyword>
<keyword id="KW-0804">Transcription</keyword>
<keyword id="KW-0805">Transcription regulation</keyword>
<keyword id="KW-0832">Ubl conjugation</keyword>
<name>SMRC1_MOUSE</name>
<evidence type="ECO:0000250" key="1">
    <source>
        <dbReference type="UniProtKB" id="Q92922"/>
    </source>
</evidence>
<evidence type="ECO:0000255" key="2"/>
<evidence type="ECO:0000255" key="3">
    <source>
        <dbReference type="PROSITE-ProRule" id="PRU00247"/>
    </source>
</evidence>
<evidence type="ECO:0000255" key="4">
    <source>
        <dbReference type="PROSITE-ProRule" id="PRU00624"/>
    </source>
</evidence>
<evidence type="ECO:0000255" key="5">
    <source>
        <dbReference type="PROSITE-ProRule" id="PRU01376"/>
    </source>
</evidence>
<evidence type="ECO:0000256" key="6">
    <source>
        <dbReference type="SAM" id="MobiDB-lite"/>
    </source>
</evidence>
<evidence type="ECO:0000269" key="7">
    <source>
    </source>
</evidence>
<evidence type="ECO:0000269" key="8">
    <source>
    </source>
</evidence>
<evidence type="ECO:0000269" key="9">
    <source>
    </source>
</evidence>
<evidence type="ECO:0000269" key="10">
    <source>
    </source>
</evidence>
<evidence type="ECO:0000269" key="11">
    <source>
    </source>
</evidence>
<evidence type="ECO:0000303" key="12">
    <source>
    </source>
</evidence>
<evidence type="ECO:0000303" key="13">
    <source>
    </source>
</evidence>
<evidence type="ECO:0000303" key="14">
    <source>
    </source>
</evidence>
<evidence type="ECO:0000305" key="15"/>
<evidence type="ECO:0007744" key="16">
    <source>
    </source>
</evidence>
<evidence type="ECO:0007744" key="17">
    <source>
    </source>
</evidence>
<evidence type="ECO:0007744" key="18">
    <source>
    </source>
</evidence>
<evidence type="ECO:0007744" key="19">
    <source>
    </source>
</evidence>
<dbReference type="EMBL" id="U85614">
    <property type="protein sequence ID" value="AAB42085.1"/>
    <property type="status" value="ALT_FRAME"/>
    <property type="molecule type" value="mRNA"/>
</dbReference>
<dbReference type="EMBL" id="BC052423">
    <property type="protein sequence ID" value="AAH52423.1"/>
    <property type="molecule type" value="mRNA"/>
</dbReference>
<dbReference type="EMBL" id="BC053064">
    <property type="protein sequence ID" value="AAH53064.1"/>
    <property type="molecule type" value="mRNA"/>
</dbReference>
<dbReference type="CCDS" id="CCDS23561.1">
    <molecule id="P97496-1"/>
</dbReference>
<dbReference type="PIR" id="T30967">
    <property type="entry name" value="T30967"/>
</dbReference>
<dbReference type="RefSeq" id="NP_033237.2">
    <molecule id="P97496-1"/>
    <property type="nucleotide sequence ID" value="NM_009211.3"/>
</dbReference>
<dbReference type="BMRB" id="P97496"/>
<dbReference type="SMR" id="P97496"/>
<dbReference type="BioGRID" id="203338">
    <property type="interactions" value="45"/>
</dbReference>
<dbReference type="ComplexPortal" id="CPX-1232">
    <property type="entry name" value="SWI/SNF ATP-dependent chromatin remodeling complex, ACTL6A-ARID1A-SMARCA2 variant"/>
</dbReference>
<dbReference type="ComplexPortal" id="CPX-1233">
    <property type="entry name" value="SWI/SNF ATP-dependent chromatin remodeling complex, ACTL6A-ARID1A-SMARCA4 variant"/>
</dbReference>
<dbReference type="ComplexPortal" id="CPX-1234">
    <property type="entry name" value="SWI/SNF ATP-dependent chromatin remodeling complex, ACTL6A-ARID1B-SMARCA2 variant"/>
</dbReference>
<dbReference type="ComplexPortal" id="CPX-1235">
    <property type="entry name" value="SWI/SNF ATP-dependent chromatin remodeling complex, ACTL6A-ARID1B-SMARCA4 variant"/>
</dbReference>
<dbReference type="ComplexPortal" id="CPX-1236">
    <property type="entry name" value="SWI/SNF ATP-dependent chromatin remodeling complex, ACTL6B-ARID1A-SMARCA2 variant"/>
</dbReference>
<dbReference type="ComplexPortal" id="CPX-1237">
    <property type="entry name" value="SWI/SNF ATP-dependent chromatin remodeling complex, ACTL6B-ARID1A-SMARCA4 variant"/>
</dbReference>
<dbReference type="ComplexPortal" id="CPX-1238">
    <property type="entry name" value="SWI/SNF ATP-dependent chromatin remodeling complex, ACTL6B-ARID1B-SMARCA2 variant"/>
</dbReference>
<dbReference type="ComplexPortal" id="CPX-1239">
    <property type="entry name" value="SWI/SNF ATP-dependent chromatin remodeling complex, ACTL6B-ARID1B-SMARCA4 variant"/>
</dbReference>
<dbReference type="ComplexPortal" id="CPX-1240">
    <property type="entry name" value="Muscle cell-specific SWI/SNF ATP-dependent chromatin remodeling complex, ACTL6A-ARID1A-SMARCA2 variant"/>
</dbReference>
<dbReference type="ComplexPortal" id="CPX-1241">
    <property type="entry name" value="Muscle cell-specific SWI/SNF ATP-dependent chromatin remodeling complex, ACTL6A-ARID1A-SMARCA4 variant"/>
</dbReference>
<dbReference type="ComplexPortal" id="CPX-1242">
    <property type="entry name" value="Muscle cell-specific SWI/SNF ATP-dependent chromatin remodeling complex, ACTL6A-ARID1B-SMARCA2 variant"/>
</dbReference>
<dbReference type="ComplexPortal" id="CPX-1243">
    <property type="entry name" value="Muscle cell-specific SWI/SNF ATP-dependent chromatin remodeling complex, ACTL6A-ARID1B-SMARCA4 variant"/>
</dbReference>
<dbReference type="ComplexPortal" id="CPX-1244">
    <property type="entry name" value="Muscle cell-specific SWI/SNF ATP-dependent chromatin remodeling complex, ACTL6B-ARID1A-SMARCA2 variant"/>
</dbReference>
<dbReference type="ComplexPortal" id="CPX-1245">
    <property type="entry name" value="Muscle cell-specific SWI/SNF ATP-dependent chromatin remodeling complex, ACTL6B-ARID1A-SMARCA4 variant"/>
</dbReference>
<dbReference type="ComplexPortal" id="CPX-1246">
    <property type="entry name" value="Muscle cell-specific SWI/SNF ATP-dependent chromatin remodeling complex, ACTL6B-ARID1B-SMARCA2 variant"/>
</dbReference>
<dbReference type="ComplexPortal" id="CPX-1247">
    <property type="entry name" value="Muscle cell-specific SWI/SNF ATP-dependent chromatin remodeling complex, ACTL6B-ARID1B-SMARCA4 variant"/>
</dbReference>
<dbReference type="ComplexPortal" id="CPX-1248">
    <property type="entry name" value="Polybromo-associated SWI/SNF ATP-dependent chromatin remodeling complex, ACTL6A variant"/>
</dbReference>
<dbReference type="ComplexPortal" id="CPX-1250">
    <property type="entry name" value="Polybromo-associated SWI/SNF ATP-dependent chromatin remodeling complex, ACTL6B variant"/>
</dbReference>
<dbReference type="ComplexPortal" id="CPX-1251">
    <property type="entry name" value="Embryonic stem cell-specific SWI/SNF ATP-dependent chromatin remodeling complex"/>
</dbReference>
<dbReference type="ComplexPortal" id="CPX-1252">
    <property type="entry name" value="Neural progenitor-specific SWI/SNF ATP-dependent chromatin remodeling complex, ARID1A-SMARCA2 variant"/>
</dbReference>
<dbReference type="ComplexPortal" id="CPX-1253">
    <property type="entry name" value="Neural progenitor-specific SWI/SNF ATP-dependent chromatin remodeling complex, ARID1A-SMARCA4 variant"/>
</dbReference>
<dbReference type="ComplexPortal" id="CPX-1254">
    <property type="entry name" value="Neural progenitor-specific SWI/SNF ATP-dependent chromatin remodeling complex, ARID1B-SMARCA2 variant"/>
</dbReference>
<dbReference type="ComplexPortal" id="CPX-1255">
    <property type="entry name" value="Neural progenitor-specific SWI/SNF ATP-dependent chromatin remodeling complex, ARID1B-SMARCA4 variant"/>
</dbReference>
<dbReference type="ComplexPortal" id="CPX-1256">
    <property type="entry name" value="Neuron-specific SWI/SNF ATP-dependent chromatin remodeling complex, ARID1A-SMARCA2 variant"/>
</dbReference>
<dbReference type="ComplexPortal" id="CPX-1257">
    <property type="entry name" value="Neuron-specific SWI/SNF ATP-dependent chromatin remodeling complex, ARID1A-SMARCA4 variant"/>
</dbReference>
<dbReference type="ComplexPortal" id="CPX-1258">
    <property type="entry name" value="Neuron-specific SWI/SNF ATP-dependent chromatin remodeling complex, ARID1B-SMARCA2 variant"/>
</dbReference>
<dbReference type="ComplexPortal" id="CPX-1259">
    <property type="entry name" value="Neuron-specific SWI/SNF ATP-dependent chromatin remodeling complex, ARID1B-SMARCA4 variant"/>
</dbReference>
<dbReference type="ComplexPortal" id="CPX-4202">
    <property type="entry name" value="GBAF (SWI/SNF) ATP-dependent chromatin remodeling complex, ACTL6A-BICRA-SMARCA2 variant"/>
</dbReference>
<dbReference type="ComplexPortal" id="CPX-4204">
    <property type="entry name" value="GBAF (SWI/SNF) ATP-dependent chromatin remodeling complex, ACTL6A-BICRAL-SMARCA2 variant"/>
</dbReference>
<dbReference type="ComplexPortal" id="CPX-4221">
    <property type="entry name" value="GBAF (SWI/SNF) ATP-dependent chromatin remodeling complex, ACTL6A-BICRA-SMARCA4 variant"/>
</dbReference>
<dbReference type="ComplexPortal" id="CPX-4222">
    <property type="entry name" value="GBAF (SWI/SNF) ATP-dependent chromatin remodeling complex, ACTL6A-BICRAL-SMARCA4 variant"/>
</dbReference>
<dbReference type="ComplexPortal" id="CPX-4227">
    <property type="entry name" value="GBAF (SWI/SNF) ATP-dependent chromatin remodeling complex, ACTL6B-BICRA-SMARCA2 variant"/>
</dbReference>
<dbReference type="ComplexPortal" id="CPX-4228">
    <property type="entry name" value="GBAF (SWI/SNF) ATP-dependent chromatin remodeling complex, ACTL6B-BICRAL-SMARCA2 variant"/>
</dbReference>
<dbReference type="ComplexPortal" id="CPX-4229">
    <property type="entry name" value="GBAF (SWI/SNF) ATP-dependent chromatin remodeling complex, ACTL6B-BICRA-SMARCA4 variant"/>
</dbReference>
<dbReference type="ComplexPortal" id="CPX-4230">
    <property type="entry name" value="GBAF (SWI/SNF) ATP-dependent chromatin remodeling complex, ACTL6B-BICRAL-SMARCA4 variant"/>
</dbReference>
<dbReference type="CORUM" id="P97496"/>
<dbReference type="DIP" id="DIP-39986N"/>
<dbReference type="FunCoup" id="P97496">
    <property type="interactions" value="4088"/>
</dbReference>
<dbReference type="IntAct" id="P97496">
    <property type="interactions" value="35"/>
</dbReference>
<dbReference type="MINT" id="P97496"/>
<dbReference type="STRING" id="10090.ENSMUSP00000086094"/>
<dbReference type="GlyGen" id="P97496">
    <property type="glycosylation" value="5 sites, 1 O-linked glycan (1 site)"/>
</dbReference>
<dbReference type="iPTMnet" id="P97496"/>
<dbReference type="PhosphoSitePlus" id="P97496"/>
<dbReference type="SwissPalm" id="P97496"/>
<dbReference type="jPOST" id="P97496"/>
<dbReference type="PaxDb" id="10090-ENSMUSP00000086094"/>
<dbReference type="PeptideAtlas" id="P97496"/>
<dbReference type="ProteomicsDB" id="257277">
    <molecule id="P97496-1"/>
</dbReference>
<dbReference type="ProteomicsDB" id="257278">
    <molecule id="P97496-2"/>
</dbReference>
<dbReference type="Pumba" id="P97496"/>
<dbReference type="Antibodypedia" id="3168">
    <property type="antibodies" value="250 antibodies from 37 providers"/>
</dbReference>
<dbReference type="DNASU" id="20588"/>
<dbReference type="Ensembl" id="ENSMUST00000088716.12">
    <molecule id="P97496-1"/>
    <property type="protein sequence ID" value="ENSMUSP00000086094.6"/>
    <property type="gene ID" value="ENSMUSG00000032481.18"/>
</dbReference>
<dbReference type="Ensembl" id="ENSMUST00000197984.5">
    <molecule id="P97496-2"/>
    <property type="protein sequence ID" value="ENSMUSP00000142611.2"/>
    <property type="gene ID" value="ENSMUSG00000032481.18"/>
</dbReference>
<dbReference type="GeneID" id="20588"/>
<dbReference type="KEGG" id="mmu:20588"/>
<dbReference type="UCSC" id="uc009rto.1">
    <molecule id="P97496-2"/>
    <property type="organism name" value="mouse"/>
</dbReference>
<dbReference type="UCSC" id="uc009rtp.1">
    <molecule id="P97496-1"/>
    <property type="organism name" value="mouse"/>
</dbReference>
<dbReference type="AGR" id="MGI:1203524"/>
<dbReference type="CTD" id="6599"/>
<dbReference type="MGI" id="MGI:1203524">
    <property type="gene designation" value="Smarcc1"/>
</dbReference>
<dbReference type="VEuPathDB" id="HostDB:ENSMUSG00000032481"/>
<dbReference type="eggNOG" id="KOG1279">
    <property type="taxonomic scope" value="Eukaryota"/>
</dbReference>
<dbReference type="GeneTree" id="ENSGT00940000156347"/>
<dbReference type="InParanoid" id="P97496"/>
<dbReference type="OMA" id="TIDMPDP"/>
<dbReference type="OrthoDB" id="65313at9989"/>
<dbReference type="PhylomeDB" id="P97496"/>
<dbReference type="TreeFam" id="TF314710"/>
<dbReference type="Reactome" id="R-MMU-3214858">
    <property type="pathway name" value="RMTs methylate histone arginines"/>
</dbReference>
<dbReference type="Reactome" id="R-MMU-8939243">
    <property type="pathway name" value="RUNX1 interacts with co-factors whose precise effect on RUNX1 targets is not known"/>
</dbReference>
<dbReference type="BioGRID-ORCS" id="20588">
    <property type="hits" value="7 hits in 84 CRISPR screens"/>
</dbReference>
<dbReference type="ChiTaRS" id="Smarcc1">
    <property type="organism name" value="mouse"/>
</dbReference>
<dbReference type="PRO" id="PR:P97496"/>
<dbReference type="Proteomes" id="UP000000589">
    <property type="component" value="Chromosome 9"/>
</dbReference>
<dbReference type="RNAct" id="P97496">
    <property type="molecule type" value="protein"/>
</dbReference>
<dbReference type="Bgee" id="ENSMUSG00000032481">
    <property type="expression patterns" value="Expressed in urogenital fold and 260 other cell types or tissues"/>
</dbReference>
<dbReference type="ExpressionAtlas" id="P97496">
    <property type="expression patterns" value="baseline and differential"/>
</dbReference>
<dbReference type="GO" id="GO:0035060">
    <property type="term" value="C:brahma complex"/>
    <property type="evidence" value="ECO:0000303"/>
    <property type="project" value="ComplexPortal"/>
</dbReference>
<dbReference type="GO" id="GO:0000785">
    <property type="term" value="C:chromatin"/>
    <property type="evidence" value="ECO:0000303"/>
    <property type="project" value="ComplexPortal"/>
</dbReference>
<dbReference type="GO" id="GO:0005737">
    <property type="term" value="C:cytoplasm"/>
    <property type="evidence" value="ECO:0000250"/>
    <property type="project" value="UniProtKB"/>
</dbReference>
<dbReference type="GO" id="GO:0140288">
    <property type="term" value="C:GBAF complex"/>
    <property type="evidence" value="ECO:0000303"/>
    <property type="project" value="ComplexPortal"/>
</dbReference>
<dbReference type="GO" id="GO:0000776">
    <property type="term" value="C:kinetochore"/>
    <property type="evidence" value="ECO:0000303"/>
    <property type="project" value="ComplexPortal"/>
</dbReference>
<dbReference type="GO" id="GO:0001673">
    <property type="term" value="C:male germ cell nucleus"/>
    <property type="evidence" value="ECO:0000314"/>
    <property type="project" value="MGI"/>
</dbReference>
<dbReference type="GO" id="GO:0071565">
    <property type="term" value="C:nBAF complex"/>
    <property type="evidence" value="ECO:0000314"/>
    <property type="project" value="UniProtKB"/>
</dbReference>
<dbReference type="GO" id="GO:0071564">
    <property type="term" value="C:npBAF complex"/>
    <property type="evidence" value="ECO:0000314"/>
    <property type="project" value="UniProtKB"/>
</dbReference>
<dbReference type="GO" id="GO:0016363">
    <property type="term" value="C:nuclear matrix"/>
    <property type="evidence" value="ECO:0000303"/>
    <property type="project" value="ComplexPortal"/>
</dbReference>
<dbReference type="GO" id="GO:0005654">
    <property type="term" value="C:nucleoplasm"/>
    <property type="evidence" value="ECO:0000304"/>
    <property type="project" value="Reactome"/>
</dbReference>
<dbReference type="GO" id="GO:0005634">
    <property type="term" value="C:nucleus"/>
    <property type="evidence" value="ECO:0000314"/>
    <property type="project" value="UniProtKB"/>
</dbReference>
<dbReference type="GO" id="GO:0016586">
    <property type="term" value="C:RSC-type complex"/>
    <property type="evidence" value="ECO:0000303"/>
    <property type="project" value="ComplexPortal"/>
</dbReference>
<dbReference type="GO" id="GO:0016514">
    <property type="term" value="C:SWI/SNF complex"/>
    <property type="evidence" value="ECO:0000314"/>
    <property type="project" value="UniProtKB"/>
</dbReference>
<dbReference type="GO" id="GO:0001741">
    <property type="term" value="C:XY body"/>
    <property type="evidence" value="ECO:0000314"/>
    <property type="project" value="UniProtKB"/>
</dbReference>
<dbReference type="GO" id="GO:0003682">
    <property type="term" value="F:chromatin binding"/>
    <property type="evidence" value="ECO:0000314"/>
    <property type="project" value="MGI"/>
</dbReference>
<dbReference type="GO" id="GO:0009887">
    <property type="term" value="P:animal organ morphogenesis"/>
    <property type="evidence" value="ECO:0000315"/>
    <property type="project" value="MGI"/>
</dbReference>
<dbReference type="GO" id="GO:0006338">
    <property type="term" value="P:chromatin remodeling"/>
    <property type="evidence" value="ECO:0000303"/>
    <property type="project" value="ComplexPortal"/>
</dbReference>
<dbReference type="GO" id="GO:0051276">
    <property type="term" value="P:chromosome organization"/>
    <property type="evidence" value="ECO:0000304"/>
    <property type="project" value="MGI"/>
</dbReference>
<dbReference type="GO" id="GO:0008286">
    <property type="term" value="P:insulin receptor signaling pathway"/>
    <property type="evidence" value="ECO:0000314"/>
    <property type="project" value="MGI"/>
</dbReference>
<dbReference type="GO" id="GO:0045596">
    <property type="term" value="P:negative regulation of cell differentiation"/>
    <property type="evidence" value="ECO:0000303"/>
    <property type="project" value="ComplexPortal"/>
</dbReference>
<dbReference type="GO" id="GO:0032435">
    <property type="term" value="P:negative regulation of proteasomal ubiquitin-dependent protein catabolic process"/>
    <property type="evidence" value="ECO:0000314"/>
    <property type="project" value="MGI"/>
</dbReference>
<dbReference type="GO" id="GO:0007399">
    <property type="term" value="P:nervous system development"/>
    <property type="evidence" value="ECO:0007669"/>
    <property type="project" value="UniProtKB-KW"/>
</dbReference>
<dbReference type="GO" id="GO:0006337">
    <property type="term" value="P:nucleosome disassembly"/>
    <property type="evidence" value="ECO:0007669"/>
    <property type="project" value="Ensembl"/>
</dbReference>
<dbReference type="GO" id="GO:0045597">
    <property type="term" value="P:positive regulation of cell differentiation"/>
    <property type="evidence" value="ECO:0000303"/>
    <property type="project" value="ComplexPortal"/>
</dbReference>
<dbReference type="GO" id="GO:0008284">
    <property type="term" value="P:positive regulation of cell population proliferation"/>
    <property type="evidence" value="ECO:0000303"/>
    <property type="project" value="ComplexPortal"/>
</dbReference>
<dbReference type="GO" id="GO:2000781">
    <property type="term" value="P:positive regulation of double-strand break repair"/>
    <property type="evidence" value="ECO:0000303"/>
    <property type="project" value="ComplexPortal"/>
</dbReference>
<dbReference type="GO" id="GO:0045663">
    <property type="term" value="P:positive regulation of myoblast differentiation"/>
    <property type="evidence" value="ECO:0000303"/>
    <property type="project" value="ComplexPortal"/>
</dbReference>
<dbReference type="GO" id="GO:1902459">
    <property type="term" value="P:positive regulation of stem cell population maintenance"/>
    <property type="evidence" value="ECO:0000303"/>
    <property type="project" value="ComplexPortal"/>
</dbReference>
<dbReference type="GO" id="GO:0045582">
    <property type="term" value="P:positive regulation of T cell differentiation"/>
    <property type="evidence" value="ECO:0000303"/>
    <property type="project" value="ComplexPortal"/>
</dbReference>
<dbReference type="GO" id="GO:0045944">
    <property type="term" value="P:positive regulation of transcription by RNA polymerase II"/>
    <property type="evidence" value="ECO:0000316"/>
    <property type="project" value="MGI"/>
</dbReference>
<dbReference type="GO" id="GO:0030850">
    <property type="term" value="P:prostate gland development"/>
    <property type="evidence" value="ECO:0007669"/>
    <property type="project" value="Ensembl"/>
</dbReference>
<dbReference type="GO" id="GO:0070316">
    <property type="term" value="P:regulation of G0 to G1 transition"/>
    <property type="evidence" value="ECO:0000303"/>
    <property type="project" value="ComplexPortal"/>
</dbReference>
<dbReference type="GO" id="GO:2000045">
    <property type="term" value="P:regulation of G1/S transition of mitotic cell cycle"/>
    <property type="evidence" value="ECO:0000303"/>
    <property type="project" value="ComplexPortal"/>
</dbReference>
<dbReference type="GO" id="GO:0030071">
    <property type="term" value="P:regulation of mitotic metaphase/anaphase transition"/>
    <property type="evidence" value="ECO:0000303"/>
    <property type="project" value="ComplexPortal"/>
</dbReference>
<dbReference type="GO" id="GO:2000819">
    <property type="term" value="P:regulation of nucleotide-excision repair"/>
    <property type="evidence" value="ECO:0000303"/>
    <property type="project" value="ComplexPortal"/>
</dbReference>
<dbReference type="GO" id="GO:0006357">
    <property type="term" value="P:regulation of transcription by RNA polymerase II"/>
    <property type="evidence" value="ECO:0000303"/>
    <property type="project" value="ComplexPortal"/>
</dbReference>
<dbReference type="FunFam" id="1.10.10.60:FF:000014">
    <property type="entry name" value="SWI/SNF complex subunit SMARCC2 isoform C"/>
    <property type="match status" value="1"/>
</dbReference>
<dbReference type="FunFam" id="1.10.10.10:FF:000020">
    <property type="entry name" value="SWI/SNF complex subunit SMARCC2 isoform c"/>
    <property type="match status" value="1"/>
</dbReference>
<dbReference type="Gene3D" id="1.10.10.60">
    <property type="entry name" value="Homeodomain-like"/>
    <property type="match status" value="1"/>
</dbReference>
<dbReference type="Gene3D" id="1.10.10.10">
    <property type="entry name" value="Winged helix-like DNA-binding domain superfamily/Winged helix DNA-binding domain"/>
    <property type="match status" value="1"/>
</dbReference>
<dbReference type="InterPro" id="IPR036420">
    <property type="entry name" value="BRCT_dom_sf"/>
</dbReference>
<dbReference type="InterPro" id="IPR000953">
    <property type="entry name" value="Chromo/chromo_shadow_dom"/>
</dbReference>
<dbReference type="InterPro" id="IPR009057">
    <property type="entry name" value="Homeodomain-like_sf"/>
</dbReference>
<dbReference type="InterPro" id="IPR049898">
    <property type="entry name" value="MARR_BRCT_CHROMO"/>
</dbReference>
<dbReference type="InterPro" id="IPR001005">
    <property type="entry name" value="SANT/Myb"/>
</dbReference>
<dbReference type="InterPro" id="IPR017884">
    <property type="entry name" value="SANT_dom"/>
</dbReference>
<dbReference type="InterPro" id="IPR032451">
    <property type="entry name" value="SMARCC_C"/>
</dbReference>
<dbReference type="InterPro" id="IPR032450">
    <property type="entry name" value="SMARCC_N"/>
</dbReference>
<dbReference type="InterPro" id="IPR007526">
    <property type="entry name" value="SWIRM"/>
</dbReference>
<dbReference type="InterPro" id="IPR032448">
    <property type="entry name" value="SWIRM-assoc"/>
</dbReference>
<dbReference type="InterPro" id="IPR036388">
    <property type="entry name" value="WH-like_DNA-bd_sf"/>
</dbReference>
<dbReference type="PANTHER" id="PTHR15381:SF1">
    <property type="entry name" value="CHONDROITIN SULFATE PROTEOGLYCAN 5"/>
    <property type="match status" value="1"/>
</dbReference>
<dbReference type="PANTHER" id="PTHR15381">
    <property type="entry name" value="CHONDROITIN SULFATE PROTEOGLYCAN 5 -RELATED"/>
    <property type="match status" value="1"/>
</dbReference>
<dbReference type="Pfam" id="PF00249">
    <property type="entry name" value="Myb_DNA-binding"/>
    <property type="match status" value="1"/>
</dbReference>
<dbReference type="Pfam" id="PF04433">
    <property type="entry name" value="SWIRM"/>
    <property type="match status" value="1"/>
</dbReference>
<dbReference type="Pfam" id="PF16495">
    <property type="entry name" value="SWIRM-assoc_1"/>
    <property type="match status" value="1"/>
</dbReference>
<dbReference type="Pfam" id="PF16496">
    <property type="entry name" value="SWIRM-assoc_2"/>
    <property type="match status" value="1"/>
</dbReference>
<dbReference type="Pfam" id="PF16498">
    <property type="entry name" value="SWIRM-assoc_3"/>
    <property type="match status" value="1"/>
</dbReference>
<dbReference type="SMART" id="SM00298">
    <property type="entry name" value="CHROMO"/>
    <property type="match status" value="1"/>
</dbReference>
<dbReference type="SMART" id="SM00717">
    <property type="entry name" value="SANT"/>
    <property type="match status" value="1"/>
</dbReference>
<dbReference type="SUPFAM" id="SSF52113">
    <property type="entry name" value="BRCT domain"/>
    <property type="match status" value="1"/>
</dbReference>
<dbReference type="SUPFAM" id="SSF46689">
    <property type="entry name" value="Homeodomain-like"/>
    <property type="match status" value="2"/>
</dbReference>
<dbReference type="PROSITE" id="PS52032">
    <property type="entry name" value="MARR_BRCT_CHROMO"/>
    <property type="match status" value="1"/>
</dbReference>
<dbReference type="PROSITE" id="PS51293">
    <property type="entry name" value="SANT"/>
    <property type="match status" value="1"/>
</dbReference>
<dbReference type="PROSITE" id="PS50934">
    <property type="entry name" value="SWIRM"/>
    <property type="match status" value="1"/>
</dbReference>
<accession>P97496</accession>
<accession>Q7TS80</accession>
<accession>Q7TT29</accession>
<gene>
    <name type="primary">Smarcc1</name>
    <name type="synonym">Baf155</name>
    <name type="synonym">Srg3</name>
</gene>
<proteinExistence type="evidence at protein level"/>
<sequence>MAATAGGGPGAAAGAVGAGGAAAASGLAVYRRKDGGPASKFWESPDTVSQLDSVRVWLGKHYKKYVHADAPTNKTLAGLVVQLLQFQEDAFGKHVTNPAFTKLPAKCFMDFKAGGTLCHILGAAYKYKNEQGWRRFDLQNPSRMDRNVEMFMNIEKTLVQNNCLTRPNIYLIPDIDLKLANKLKDIIKRHQGTFTDEKSKASHHIYPYPSSQEDEEWLRPVMRRDKQVLVHWGFYPDSYDTWVHSNDVDAEIEDAPIPEKPWKVHVKWILDTDVFNEWMNEEDYEVDENRKPVSFRQRISTKNEEPVRSPERRDRKASANSRKRKPSPSPPPPTATESRKKSGKKGQASLYGKRRSQKEEDEQEDLTKDMEDPTPVPNIEEVVLPKNVNPKKDSENTPVKGGTVADLDEQDEEAVTTGGKEDEDPSKGDPSRSVDPGEDNVTEQTNHIIIPSYASWFDYNCIHVIERRALPEFFNGKNKSKTPEIYLAYRNFMIDTYRLNPQEYLTSTACRRNLTGDVCAVMRVHAFLEQWGLVNYQVDPESRPMAMGPPPTPHFNVLADTPSGLVPLHLRSPQVPAAQQMLNFPEKNKEKPIDLQNFGLRTDIYSKKTLAKSKGASAGREWTEQETLLLLEALEMYKDDWNKVSEHVGSRTQDECILHFLRLPIEDPYLENSDASLGPLAYQPVPFSQSGNPVMSTVAFLASVVDPRVASAAAKAALEEFSRVREEVPLELVEAHVKKVQEAARASGKVDPTYGLESSCIAGTGPDEPEKLEGSEEEKMETDPDGQQPEKAENKVENESDEGDKIQDRENEKNTEKEQDSDVSEDVKPEEKENEENKELTDTCKERESDAGKKKVEHEISEGNVATAAAAALASAATKAKHLAAVEERKIKSLVALLVETQMKKLEIKLRHFEELETIMDREKEALEQQRQQLLTERQNFHMEQLKYAELRARQQMEQQQQHGQTPQQAHQHTGGPGMAPLGATGHPGMMPHQQPPPYPLMHHQMPPPHPPQPGQIPGPGSMMPGQPMPGRMIPAVAANIHPTGSGPTPPGMPPMPGNILGPRVPLTAPNGMYPPPPQQQQPPPPADGVPPPPAPGPPASATP</sequence>